<reference evidence="13" key="1">
    <citation type="journal article" date="2000" name="Science">
        <title>The genome sequence of Drosophila melanogaster.</title>
        <authorList>
            <person name="Adams M.D."/>
            <person name="Celniker S.E."/>
            <person name="Holt R.A."/>
            <person name="Evans C.A."/>
            <person name="Gocayne J.D."/>
            <person name="Amanatides P.G."/>
            <person name="Scherer S.E."/>
            <person name="Li P.W."/>
            <person name="Hoskins R.A."/>
            <person name="Galle R.F."/>
            <person name="George R.A."/>
            <person name="Lewis S.E."/>
            <person name="Richards S."/>
            <person name="Ashburner M."/>
            <person name="Henderson S.N."/>
            <person name="Sutton G.G."/>
            <person name="Wortman J.R."/>
            <person name="Yandell M.D."/>
            <person name="Zhang Q."/>
            <person name="Chen L.X."/>
            <person name="Brandon R.C."/>
            <person name="Rogers Y.-H.C."/>
            <person name="Blazej R.G."/>
            <person name="Champe M."/>
            <person name="Pfeiffer B.D."/>
            <person name="Wan K.H."/>
            <person name="Doyle C."/>
            <person name="Baxter E.G."/>
            <person name="Helt G."/>
            <person name="Nelson C.R."/>
            <person name="Miklos G.L.G."/>
            <person name="Abril J.F."/>
            <person name="Agbayani A."/>
            <person name="An H.-J."/>
            <person name="Andrews-Pfannkoch C."/>
            <person name="Baldwin D."/>
            <person name="Ballew R.M."/>
            <person name="Basu A."/>
            <person name="Baxendale J."/>
            <person name="Bayraktaroglu L."/>
            <person name="Beasley E.M."/>
            <person name="Beeson K.Y."/>
            <person name="Benos P.V."/>
            <person name="Berman B.P."/>
            <person name="Bhandari D."/>
            <person name="Bolshakov S."/>
            <person name="Borkova D."/>
            <person name="Botchan M.R."/>
            <person name="Bouck J."/>
            <person name="Brokstein P."/>
            <person name="Brottier P."/>
            <person name="Burtis K.C."/>
            <person name="Busam D.A."/>
            <person name="Butler H."/>
            <person name="Cadieu E."/>
            <person name="Center A."/>
            <person name="Chandra I."/>
            <person name="Cherry J.M."/>
            <person name="Cawley S."/>
            <person name="Dahlke C."/>
            <person name="Davenport L.B."/>
            <person name="Davies P."/>
            <person name="de Pablos B."/>
            <person name="Delcher A."/>
            <person name="Deng Z."/>
            <person name="Mays A.D."/>
            <person name="Dew I."/>
            <person name="Dietz S.M."/>
            <person name="Dodson K."/>
            <person name="Doup L.E."/>
            <person name="Downes M."/>
            <person name="Dugan-Rocha S."/>
            <person name="Dunkov B.C."/>
            <person name="Dunn P."/>
            <person name="Durbin K.J."/>
            <person name="Evangelista C.C."/>
            <person name="Ferraz C."/>
            <person name="Ferriera S."/>
            <person name="Fleischmann W."/>
            <person name="Fosler C."/>
            <person name="Gabrielian A.E."/>
            <person name="Garg N.S."/>
            <person name="Gelbart W.M."/>
            <person name="Glasser K."/>
            <person name="Glodek A."/>
            <person name="Gong F."/>
            <person name="Gorrell J.H."/>
            <person name="Gu Z."/>
            <person name="Guan P."/>
            <person name="Harris M."/>
            <person name="Harris N.L."/>
            <person name="Harvey D.A."/>
            <person name="Heiman T.J."/>
            <person name="Hernandez J.R."/>
            <person name="Houck J."/>
            <person name="Hostin D."/>
            <person name="Houston K.A."/>
            <person name="Howland T.J."/>
            <person name="Wei M.-H."/>
            <person name="Ibegwam C."/>
            <person name="Jalali M."/>
            <person name="Kalush F."/>
            <person name="Karpen G.H."/>
            <person name="Ke Z."/>
            <person name="Kennison J.A."/>
            <person name="Ketchum K.A."/>
            <person name="Kimmel B.E."/>
            <person name="Kodira C.D."/>
            <person name="Kraft C.L."/>
            <person name="Kravitz S."/>
            <person name="Kulp D."/>
            <person name="Lai Z."/>
            <person name="Lasko P."/>
            <person name="Lei Y."/>
            <person name="Levitsky A.A."/>
            <person name="Li J.H."/>
            <person name="Li Z."/>
            <person name="Liang Y."/>
            <person name="Lin X."/>
            <person name="Liu X."/>
            <person name="Mattei B."/>
            <person name="McIntosh T.C."/>
            <person name="McLeod M.P."/>
            <person name="McPherson D."/>
            <person name="Merkulov G."/>
            <person name="Milshina N.V."/>
            <person name="Mobarry C."/>
            <person name="Morris J."/>
            <person name="Moshrefi A."/>
            <person name="Mount S.M."/>
            <person name="Moy M."/>
            <person name="Murphy B."/>
            <person name="Murphy L."/>
            <person name="Muzny D.M."/>
            <person name="Nelson D.L."/>
            <person name="Nelson D.R."/>
            <person name="Nelson K.A."/>
            <person name="Nixon K."/>
            <person name="Nusskern D.R."/>
            <person name="Pacleb J.M."/>
            <person name="Palazzolo M."/>
            <person name="Pittman G.S."/>
            <person name="Pan S."/>
            <person name="Pollard J."/>
            <person name="Puri V."/>
            <person name="Reese M.G."/>
            <person name="Reinert K."/>
            <person name="Remington K."/>
            <person name="Saunders R.D.C."/>
            <person name="Scheeler F."/>
            <person name="Shen H."/>
            <person name="Shue B.C."/>
            <person name="Siden-Kiamos I."/>
            <person name="Simpson M."/>
            <person name="Skupski M.P."/>
            <person name="Smith T.J."/>
            <person name="Spier E."/>
            <person name="Spradling A.C."/>
            <person name="Stapleton M."/>
            <person name="Strong R."/>
            <person name="Sun E."/>
            <person name="Svirskas R."/>
            <person name="Tector C."/>
            <person name="Turner R."/>
            <person name="Venter E."/>
            <person name="Wang A.H."/>
            <person name="Wang X."/>
            <person name="Wang Z.-Y."/>
            <person name="Wassarman D.A."/>
            <person name="Weinstock G.M."/>
            <person name="Weissenbach J."/>
            <person name="Williams S.M."/>
            <person name="Woodage T."/>
            <person name="Worley K.C."/>
            <person name="Wu D."/>
            <person name="Yang S."/>
            <person name="Yao Q.A."/>
            <person name="Ye J."/>
            <person name="Yeh R.-F."/>
            <person name="Zaveri J.S."/>
            <person name="Zhan M."/>
            <person name="Zhang G."/>
            <person name="Zhao Q."/>
            <person name="Zheng L."/>
            <person name="Zheng X.H."/>
            <person name="Zhong F.N."/>
            <person name="Zhong W."/>
            <person name="Zhou X."/>
            <person name="Zhu S.C."/>
            <person name="Zhu X."/>
            <person name="Smith H.O."/>
            <person name="Gibbs R.A."/>
            <person name="Myers E.W."/>
            <person name="Rubin G.M."/>
            <person name="Venter J.C."/>
        </authorList>
    </citation>
    <scope>NUCLEOTIDE SEQUENCE [LARGE SCALE GENOMIC DNA]</scope>
    <source>
        <strain evidence="13">Berkeley</strain>
    </source>
</reference>
<reference evidence="13" key="2">
    <citation type="journal article" date="2002" name="Genome Biol.">
        <title>Annotation of the Drosophila melanogaster euchromatic genome: a systematic review.</title>
        <authorList>
            <person name="Misra S."/>
            <person name="Crosby M.A."/>
            <person name="Mungall C.J."/>
            <person name="Matthews B.B."/>
            <person name="Campbell K.S."/>
            <person name="Hradecky P."/>
            <person name="Huang Y."/>
            <person name="Kaminker J.S."/>
            <person name="Millburn G.H."/>
            <person name="Prochnik S.E."/>
            <person name="Smith C.D."/>
            <person name="Tupy J.L."/>
            <person name="Whitfield E.J."/>
            <person name="Bayraktaroglu L."/>
            <person name="Berman B.P."/>
            <person name="Bettencourt B.R."/>
            <person name="Celniker S.E."/>
            <person name="de Grey A.D.N.J."/>
            <person name="Drysdale R.A."/>
            <person name="Harris N.L."/>
            <person name="Richter J."/>
            <person name="Russo S."/>
            <person name="Schroeder A.J."/>
            <person name="Shu S.Q."/>
            <person name="Stapleton M."/>
            <person name="Yamada C."/>
            <person name="Ashburner M."/>
            <person name="Gelbart W.M."/>
            <person name="Rubin G.M."/>
            <person name="Lewis S.E."/>
        </authorList>
    </citation>
    <scope>GENOME REANNOTATION</scope>
    <source>
        <strain>Berkeley</strain>
    </source>
</reference>
<reference evidence="10" key="3">
    <citation type="journal article" date="2000" name="Science">
        <title>A Drosophila complementary DNA resource.</title>
        <authorList>
            <person name="Rubin G.M."/>
            <person name="Hong L."/>
            <person name="Brokstein P."/>
            <person name="Evans-Holm M."/>
            <person name="Frise E."/>
            <person name="Stapleton M."/>
            <person name="Harvey D.A."/>
        </authorList>
    </citation>
    <scope>NUCLEOTIDE SEQUENCE [LARGE SCALE MRNA]</scope>
</reference>
<reference evidence="9" key="4">
    <citation type="journal article" date="2012" name="PLoS Genet.">
        <title>Competition between replicative and translesion polymerases during homologous recombination repair in Drosophila.</title>
        <authorList>
            <person name="Kane D.P."/>
            <person name="Shusterman M."/>
            <person name="Rong Y."/>
            <person name="McVey M."/>
        </authorList>
    </citation>
    <scope>FUNCTION</scope>
    <scope>MUTAGENESIS OF 15-ASP--LYS-431</scope>
</reference>
<reference evidence="9" key="5">
    <citation type="journal article" date="2015" name="PLoS ONE">
        <title>Loss of Pol32 in Drosophila melanogaster causes chromosome instability and suppresses variegation.</title>
        <authorList>
            <person name="Tritto P."/>
            <person name="Palumbo V."/>
            <person name="Micale L."/>
            <person name="Marzulli M."/>
            <person name="Bozzetti M.P."/>
            <person name="Specchia V."/>
            <person name="Palumbo G."/>
            <person name="Pimpinelli S."/>
            <person name="Berloco M."/>
        </authorList>
    </citation>
    <scope>FUNCTION</scope>
    <scope>TISSUE SPECIFICITY</scope>
</reference>
<reference evidence="9" key="6">
    <citation type="journal article" date="2019" name="Genetics">
        <title>Homolog-Dependent Repair Following Dicentric Chromosome Breakage in Drosophila melanogaster.</title>
        <authorList>
            <person name="Bhandari J."/>
            <person name="Karg T."/>
            <person name="Golic K.G."/>
        </authorList>
    </citation>
    <scope>FUNCTION</scope>
</reference>
<reference evidence="9" key="7">
    <citation type="journal article" date="2019" name="PLoS Genet.">
        <title>The processivity factor Pol32 mediates nuclear localization of DNA polymerase delta and prevents chromosomal fragile site formation in Drosophila development.</title>
        <authorList>
            <person name="Ji J."/>
            <person name="Tang X."/>
            <person name="Hu W."/>
            <person name="Maggert K.A."/>
            <person name="Rong Y.S."/>
        </authorList>
    </citation>
    <scope>FUNCTION</scope>
    <scope>IDENTIFICATION IN THE DNA POLYMERASE DELTA COMPLEX</scope>
    <scope>SUBCELLULAR LOCATION</scope>
    <scope>TISSUE SPECIFICITY</scope>
    <scope>DEVELOPMENTAL STAGE</scope>
    <scope>DISRUPTION PHENOTYPE</scope>
    <scope>MUTAGENESIS OF 55-PHE--VAL-88; 64-GLN--ARG-80; 371-ASP--ASP-373; 371-ASP--THR-378; 374-GLY--THR-378; 421-GLN--ILE-424 AND 421-GLN--PHE-428</scope>
</reference>
<proteinExistence type="evidence at protein level"/>
<accession>Q9Y118</accession>
<organism evidence="13">
    <name type="scientific">Drosophila melanogaster</name>
    <name type="common">Fruit fly</name>
    <dbReference type="NCBI Taxonomy" id="7227"/>
    <lineage>
        <taxon>Eukaryota</taxon>
        <taxon>Metazoa</taxon>
        <taxon>Ecdysozoa</taxon>
        <taxon>Arthropoda</taxon>
        <taxon>Hexapoda</taxon>
        <taxon>Insecta</taxon>
        <taxon>Pterygota</taxon>
        <taxon>Neoptera</taxon>
        <taxon>Endopterygota</taxon>
        <taxon>Diptera</taxon>
        <taxon>Brachycera</taxon>
        <taxon>Muscomorpha</taxon>
        <taxon>Ephydroidea</taxon>
        <taxon>Drosophilidae</taxon>
        <taxon>Drosophila</taxon>
        <taxon>Sophophora</taxon>
    </lineage>
</organism>
<name>DPOD3_DROME</name>
<feature type="chain" id="PRO_0000448687" description="DNA polymerase delta subunit 3">
    <location>
        <begin position="1"/>
        <end position="431"/>
    </location>
</feature>
<feature type="region of interest" description="Necessary for function, possibly resulting from its inability to interact with PolD2" evidence="8">
    <location>
        <begin position="64"/>
        <end position="80"/>
    </location>
</feature>
<feature type="region of interest" description="Disordered" evidence="4">
    <location>
        <begin position="128"/>
        <end position="431"/>
    </location>
</feature>
<feature type="compositionally biased region" description="Low complexity" evidence="4">
    <location>
        <begin position="156"/>
        <end position="171"/>
    </location>
</feature>
<feature type="compositionally biased region" description="Basic and acidic residues" evidence="4">
    <location>
        <begin position="172"/>
        <end position="200"/>
    </location>
</feature>
<feature type="compositionally biased region" description="Basic and acidic residues" evidence="4">
    <location>
        <begin position="252"/>
        <end position="271"/>
    </location>
</feature>
<feature type="compositionally biased region" description="Low complexity" evidence="4">
    <location>
        <begin position="278"/>
        <end position="290"/>
    </location>
</feature>
<feature type="compositionally biased region" description="Acidic residues" evidence="4">
    <location>
        <begin position="294"/>
        <end position="307"/>
    </location>
</feature>
<feature type="compositionally biased region" description="Basic and acidic residues" evidence="4">
    <location>
        <begin position="308"/>
        <end position="328"/>
    </location>
</feature>
<feature type="compositionally biased region" description="Basic and acidic residues" evidence="4">
    <location>
        <begin position="343"/>
        <end position="362"/>
    </location>
</feature>
<feature type="compositionally biased region" description="Low complexity" evidence="4">
    <location>
        <begin position="387"/>
        <end position="411"/>
    </location>
</feature>
<feature type="mutagenesis site" description="Homologous recombination repair is reduced by 70% resulting in mutants displaying extreme sensitivity to various DNA damaging agents, except for camptothecin." evidence="5">
    <location>
        <begin position="15"/>
        <end position="431"/>
    </location>
</feature>
<feature type="mutagenesis site" description="Unable to rescue bristle and female fertility defects in mutants." evidence="8">
    <location>
        <begin position="55"/>
        <end position="88"/>
    </location>
</feature>
<feature type="mutagenesis site" description="Unable to rescue bristle and female fertility defects in mutants." evidence="8">
    <location>
        <begin position="64"/>
        <end position="80"/>
    </location>
</feature>
<feature type="mutagenesis site" description="Rescues bristle and female fertility defects in mutants." evidence="8">
    <location>
        <begin position="371"/>
        <end position="378"/>
    </location>
</feature>
<feature type="mutagenesis site" description="Rescues bristle and female fertility defects in mutants." evidence="8">
    <original>DED</original>
    <variation>AAA</variation>
    <location>
        <begin position="371"/>
        <end position="373"/>
    </location>
</feature>
<feature type="mutagenesis site" description="Rescues bristle and female fertility defects in mutants." evidence="8">
    <original>GFVIT</original>
    <variation>AFVAA</variation>
    <location>
        <begin position="374"/>
        <end position="378"/>
    </location>
</feature>
<feature type="mutagenesis site" description="Rescues bristle and female fertility defects in mutants." evidence="8">
    <location>
        <begin position="421"/>
        <end position="428"/>
    </location>
</feature>
<feature type="mutagenesis site" description="Rescues bristle and female fertility defects in mutants." evidence="8">
    <original>QAGI</original>
    <variation>AAGA</variation>
    <location>
        <begin position="421"/>
        <end position="424"/>
    </location>
</feature>
<evidence type="ECO:0000250" key="1">
    <source>
        <dbReference type="UniProtKB" id="P47110"/>
    </source>
</evidence>
<evidence type="ECO:0000250" key="2">
    <source>
        <dbReference type="UniProtKB" id="P49005"/>
    </source>
</evidence>
<evidence type="ECO:0000250" key="3">
    <source>
        <dbReference type="UniProtKB" id="Q15054"/>
    </source>
</evidence>
<evidence type="ECO:0000256" key="4">
    <source>
        <dbReference type="SAM" id="MobiDB-lite"/>
    </source>
</evidence>
<evidence type="ECO:0000269" key="5">
    <source>
    </source>
</evidence>
<evidence type="ECO:0000269" key="6">
    <source>
    </source>
</evidence>
<evidence type="ECO:0000269" key="7">
    <source>
    </source>
</evidence>
<evidence type="ECO:0000269" key="8">
    <source>
    </source>
</evidence>
<evidence type="ECO:0000305" key="9"/>
<evidence type="ECO:0000312" key="10">
    <source>
        <dbReference type="EMBL" id="AAD38629.1"/>
    </source>
</evidence>
<evidence type="ECO:0000312" key="11">
    <source>
        <dbReference type="EMBL" id="AAF53445.1"/>
    </source>
</evidence>
<evidence type="ECO:0000312" key="12">
    <source>
        <dbReference type="FlyBase" id="FBgn0283467"/>
    </source>
</evidence>
<evidence type="ECO:0000312" key="13">
    <source>
        <dbReference type="Proteomes" id="UP000000803"/>
    </source>
</evidence>
<keyword id="KW-0227">DNA damage</keyword>
<keyword id="KW-0234">DNA repair</keyword>
<keyword id="KW-0235">DNA replication</keyword>
<keyword id="KW-0539">Nucleus</keyword>
<keyword id="KW-1185">Reference proteome</keyword>
<protein>
    <recommendedName>
        <fullName evidence="12">DNA polymerase delta subunit 3</fullName>
    </recommendedName>
    <alternativeName>
        <fullName evidence="1">Pol32 polymerase delta subunit 3</fullName>
    </alternativeName>
</protein>
<dbReference type="EMBL" id="AE014134">
    <property type="protein sequence ID" value="AAF53445.1"/>
    <property type="molecule type" value="Genomic_DNA"/>
</dbReference>
<dbReference type="EMBL" id="AE014134">
    <property type="protein sequence ID" value="ADV37066.1"/>
    <property type="molecule type" value="Genomic_DNA"/>
</dbReference>
<dbReference type="EMBL" id="FM245602">
    <property type="protein sequence ID" value="CAR93528.1"/>
    <property type="molecule type" value="Genomic_DNA"/>
</dbReference>
<dbReference type="EMBL" id="FM245606">
    <property type="protein sequence ID" value="CAR93532.1"/>
    <property type="molecule type" value="Genomic_DNA"/>
</dbReference>
<dbReference type="EMBL" id="FM245609">
    <property type="protein sequence ID" value="CAR93535.1"/>
    <property type="molecule type" value="Genomic_DNA"/>
</dbReference>
<dbReference type="EMBL" id="AF145654">
    <property type="protein sequence ID" value="AAD38629.1"/>
    <property type="molecule type" value="mRNA"/>
</dbReference>
<dbReference type="RefSeq" id="NP_001188816.1">
    <property type="nucleotide sequence ID" value="NM_001201887.2"/>
</dbReference>
<dbReference type="RefSeq" id="NP_609743.1">
    <property type="nucleotide sequence ID" value="NM_135899.3"/>
</dbReference>
<dbReference type="SMR" id="Q9Y118"/>
<dbReference type="ComplexPortal" id="CPX-2421">
    <property type="entry name" value="DNA polymerase delta complex"/>
</dbReference>
<dbReference type="ComplexPortal" id="CPX-2426">
    <property type="entry name" value="DNA polymerase zeta complex"/>
</dbReference>
<dbReference type="FunCoup" id="Q9Y118">
    <property type="interactions" value="108"/>
</dbReference>
<dbReference type="IntAct" id="Q9Y118">
    <property type="interactions" value="9"/>
</dbReference>
<dbReference type="STRING" id="7227.FBpp0292263"/>
<dbReference type="PaxDb" id="7227-FBpp0292263"/>
<dbReference type="DNASU" id="34892"/>
<dbReference type="EnsemblMetazoa" id="FBtr0303164">
    <property type="protein sequence ID" value="FBpp0292263"/>
    <property type="gene ID" value="FBgn0283467"/>
</dbReference>
<dbReference type="EnsemblMetazoa" id="FBtr0336864">
    <property type="protein sequence ID" value="FBpp0307818"/>
    <property type="gene ID" value="FBgn0283467"/>
</dbReference>
<dbReference type="GeneID" id="34892"/>
<dbReference type="KEGG" id="dme:Dmel_CG3975"/>
<dbReference type="UCSC" id="CG3975-RA">
    <property type="organism name" value="d. melanogaster"/>
</dbReference>
<dbReference type="AGR" id="FB:FBgn0283467"/>
<dbReference type="CTD" id="10714"/>
<dbReference type="FlyBase" id="FBgn0283467">
    <property type="gene designation" value="PolD3"/>
</dbReference>
<dbReference type="VEuPathDB" id="VectorBase:FBgn0283467"/>
<dbReference type="eggNOG" id="ENOG502QPSW">
    <property type="taxonomic scope" value="Eukaryota"/>
</dbReference>
<dbReference type="HOGENOM" id="CLU_666107_0_0_1"/>
<dbReference type="InParanoid" id="Q9Y118"/>
<dbReference type="OMA" id="PIFKPMQ"/>
<dbReference type="OrthoDB" id="8041813at2759"/>
<dbReference type="PhylomeDB" id="Q9Y118"/>
<dbReference type="SignaLink" id="Q9Y118"/>
<dbReference type="BioGRID-ORCS" id="34892">
    <property type="hits" value="0 hits in 1 CRISPR screen"/>
</dbReference>
<dbReference type="GenomeRNAi" id="34892"/>
<dbReference type="PRO" id="PR:Q9Y118"/>
<dbReference type="Proteomes" id="UP000000803">
    <property type="component" value="Chromosome 2L"/>
</dbReference>
<dbReference type="Bgee" id="FBgn0283467">
    <property type="expression patterns" value="Expressed in ovary and 39 other cell types or tissues"/>
</dbReference>
<dbReference type="ExpressionAtlas" id="Q9Y118">
    <property type="expression patterns" value="baseline and differential"/>
</dbReference>
<dbReference type="GO" id="GO:0043625">
    <property type="term" value="C:delta DNA polymerase complex"/>
    <property type="evidence" value="ECO:0000314"/>
    <property type="project" value="FlyBase"/>
</dbReference>
<dbReference type="GO" id="GO:0005654">
    <property type="term" value="C:nucleoplasm"/>
    <property type="evidence" value="ECO:0000314"/>
    <property type="project" value="UniProtKB"/>
</dbReference>
<dbReference type="GO" id="GO:0005634">
    <property type="term" value="C:nucleus"/>
    <property type="evidence" value="ECO:0000314"/>
    <property type="project" value="FlyBase"/>
</dbReference>
<dbReference type="GO" id="GO:0016035">
    <property type="term" value="C:zeta DNA polymerase complex"/>
    <property type="evidence" value="ECO:0000250"/>
    <property type="project" value="FlyBase"/>
</dbReference>
<dbReference type="GO" id="GO:0030337">
    <property type="term" value="F:DNA polymerase processivity factor activity"/>
    <property type="evidence" value="ECO:0000315"/>
    <property type="project" value="FlyBase"/>
</dbReference>
<dbReference type="GO" id="GO:0006281">
    <property type="term" value="P:DNA repair"/>
    <property type="evidence" value="ECO:0000315"/>
    <property type="project" value="FlyBase"/>
</dbReference>
<dbReference type="GO" id="GO:0043150">
    <property type="term" value="P:DNA synthesis involved in double-strand break repair via homologous recombination"/>
    <property type="evidence" value="ECO:0000315"/>
    <property type="project" value="FlyBase"/>
</dbReference>
<dbReference type="GO" id="GO:0000727">
    <property type="term" value="P:double-strand break repair via break-induced replication"/>
    <property type="evidence" value="ECO:0000315"/>
    <property type="project" value="FlyBase"/>
</dbReference>
<dbReference type="GO" id="GO:0000724">
    <property type="term" value="P:double-strand break repair via homologous recombination"/>
    <property type="evidence" value="ECO:0000315"/>
    <property type="project" value="FlyBase"/>
</dbReference>
<dbReference type="GO" id="GO:1902969">
    <property type="term" value="P:mitotic DNA replication"/>
    <property type="evidence" value="ECO:0000315"/>
    <property type="project" value="FlyBase"/>
</dbReference>
<dbReference type="GO" id="GO:0031503">
    <property type="term" value="P:protein-containing complex localization"/>
    <property type="evidence" value="ECO:0000315"/>
    <property type="project" value="UniProtKB"/>
</dbReference>
<comment type="function">
    <text evidence="3 5 6 7 8">Accessory component of the DNA polymerase delta complex and possibly the DNA polymerase zeta complex (By similarity). As a component of the delta complex, participates in high fidelity genome replication, including lagging strand synthesis, DNA recombination and repair (PubMed:22532806, PubMed:25826374, PubMed:31100062). Required to recruit the DNA polymerase delta complex to the nucleus of rapidly dividing embryonic cells, and as a consequence is essential for genome replication during the earliest cell cycles (PubMed:25826374, PubMed:31100062). Increases the efficiency and processivity of DNA synthesis of the DNA polymerases during mitotic DNA replication and repair (PubMed:22532806, PubMed:25826374, PubMed:31100062). During development this function is essential for preventing replication stress that results in the formation of chromosomal fragile sites (CFS) such as chromosomal breaks (PubMed:25826374, PubMed:31100062). Ensures genomic stability by promoting several types of DNA repair mechanisms including repairing broken dicentric chromosomes through homolog-dependent break-induced replication (BIR) (PubMed:22532806, PubMed:25826374, PubMed:31053594). During homologous recombination (HR) repair, required for maintaining the processivity of the delta complex during break-induced replication; a form of HR that requires extensive DNA synthesis such as the repair of large gaps (PubMed:22532806, PubMed:25826374). Able to suppress position effect variegation and may therefore have a role in the induction of chromatin state changes that likely include its activities in DNA replication and repair (PubMed:25826374).</text>
</comment>
<comment type="subunit">
    <text evidence="2 8">Component of both the DNA polymerase delta and DNA polymerase zeta complexes (By similarity). The DNA polymerase delta complex consists of three subunits: the catalytic subunit PolD1 and two accessory subunits PolD2/Pol31 and PolD3/Pol32 (PubMed:31100062). Within the delta complex, interacts with both PolD1 and PolD2 (PubMed:31100062). Component of the DNA polymerase zeta complex consisting of four subunits: the catalytic subunit PolZ1 and three accessory subunits PolZ2/Rev7, PolD2/Pol31 and PolD3/Pol32 (By similarity).</text>
</comment>
<comment type="interaction">
    <interactant intactId="EBI-89582">
        <id>Q9Y118</id>
    </interactant>
    <interactant intactId="EBI-194173">
        <id>Q9W088</id>
        <label>PolD2</label>
    </interactant>
    <organismsDiffer>false</organismsDiffer>
    <experiments>3</experiments>
</comment>
<comment type="subcellular location">
    <subcellularLocation>
        <location evidence="8">Nucleus</location>
    </subcellularLocation>
    <subcellularLocation>
        <location evidence="8">Nucleus</location>
        <location evidence="8">Nucleoplasm</location>
    </subcellularLocation>
    <text evidence="8">During oogenesis, detected in the nuclei of nurse cells, follicle cells, and in the nucleoplasm of the oocyte. In syncytial cell cycles, accumulates in the nucleus during interphase but disperses into the nucleoplasm at the onset of mitosis.</text>
</comment>
<comment type="tissue specificity">
    <text evidence="6 8">Expressed in ovaries (at the protein level) (PubMed:31100062). Expressed in ovaries (PubMed:25826374).</text>
</comment>
<comment type="developmental stage">
    <text evidence="8">Expressed in adult females and embryos (at the protein level).</text>
</comment>
<comment type="disruption phenotype">
    <text evidence="8">Oocytes and embryos lacking maternal PolD3, show no nuclear localization of the delta complex members PolD1 and PolD2, resulting in limited genome replication during the earliest cell cycles and thus early developmental arrest (PubMed:31100062). Mutants, presumably with maternal but not zygotic PolD3, develop normally however adults display a variable degree of bristle loss or shortening, and females are sterile while males are fertile (PubMed:31100062). In larval salivary glands, the delta complex localizes normally to the nuclei and chromosomes display a significant decrease in homologous recombination repair (PubMed:31100062). Chromosomes also exhibit spontaneous double strand breaks that primarily result from defects in genomic replication and, to a lesser extent, in DNA repair synthesis (PubMed:31100062).</text>
</comment>
<gene>
    <name evidence="12" type="primary">PolD3</name>
    <name evidence="9" type="synonym">DNApolD3</name>
    <name evidence="1" type="synonym">Pol32</name>
    <name evidence="11" type="synonym">rd</name>
    <name evidence="12" type="ORF">CG3975</name>
</gene>
<sequence length="431" mass="47046">MSLKKALDDCMIDFDRCVLVTDLLEEYKLSYKEVNDVLEAYIKEQEPATKFEKRFLVHGKRKTQGSDSGEDLYSVVLESRMQDWLAKVQDAESQLYSVKIAGGTKAPAAIFKPMQHLEVKLAKVEQRPGAGKIVPSANGTTPHNGVKSEPTKSEPSKSAVKLEPSKSSLKSEPAKSKAEKPVASKSSPEDKKTSPKEQASKAKPAAAKKGSINSFFTAAASKPKDVKATPSKSTSGTVDNFFKKQPAGAKKSPPESEDKSKKDASNSNKKEASKKKSPSPTKKPTTANTSMQLFDEESAESSDEEEKLDMLRRKVIESDNDSDQEKASSSKRRRISDSEDEEQPPKKSADEETIALDEKMDTEPANETYLDEDGFVITQRKPTKAQPANKKVSPKAAAPVNKKKSPPSAAKAGKDAPKTKQAGIMNFFSKK</sequence>